<comment type="function">
    <text evidence="1">Catalyzes the reversible cyclization of carbamoyl aspartate to dihydroorotate.</text>
</comment>
<comment type="catalytic activity">
    <reaction evidence="1">
        <text>(S)-dihydroorotate + H2O = N-carbamoyl-L-aspartate + H(+)</text>
        <dbReference type="Rhea" id="RHEA:24296"/>
        <dbReference type="ChEBI" id="CHEBI:15377"/>
        <dbReference type="ChEBI" id="CHEBI:15378"/>
        <dbReference type="ChEBI" id="CHEBI:30864"/>
        <dbReference type="ChEBI" id="CHEBI:32814"/>
        <dbReference type="EC" id="3.5.2.3"/>
    </reaction>
</comment>
<comment type="cofactor">
    <cofactor evidence="1">
        <name>Zn(2+)</name>
        <dbReference type="ChEBI" id="CHEBI:29105"/>
    </cofactor>
    <text evidence="1">Binds 2 Zn(2+) ions per subunit.</text>
</comment>
<comment type="pathway">
    <text evidence="1">Pyrimidine metabolism; UMP biosynthesis via de novo pathway; (S)-dihydroorotate from bicarbonate: step 3/3.</text>
</comment>
<comment type="subunit">
    <text evidence="1">Homodimer.</text>
</comment>
<comment type="similarity">
    <text evidence="1">Belongs to the metallo-dependent hydrolases superfamily. DHOase family. Class II DHOase subfamily.</text>
</comment>
<sequence length="345" mass="37674">MTQITLTTPDDWHLHFRDGDMLGETVPATARLFQRAIVMPNLVPPVTTAAMALAYRDRILAARPQGSNFEPLMTLFLTNNTSAQDIIDAKAAGVVAGKLYPAGATTNSDAAVKALDELFPIFEVMAQQGMLLLVHGEVTESHIDIFDREKMFIDRYLSRIVEAIPSLKVVFEHITTKEAAEFVAEASANVAATITPQHLLLNRNDLLVGGVRPHNFCLPVLKRNIHQHALQAAVATGSSKFFLGTDSAPHEKHRKESACGCAGCYSAWSALELYAQVFDNLGALDKLEGFASLHGADFYGLPRNSGTVTLVKQEWTVPEEIILPNGNPIVPFFAGQKVNWKVKTA</sequence>
<proteinExistence type="inferred from homology"/>
<name>PYRC_SHEFN</name>
<accession>Q087W5</accession>
<dbReference type="EC" id="3.5.2.3" evidence="1"/>
<dbReference type="EMBL" id="CP000447">
    <property type="protein sequence ID" value="ABI70450.1"/>
    <property type="molecule type" value="Genomic_DNA"/>
</dbReference>
<dbReference type="RefSeq" id="WP_011636077.1">
    <property type="nucleotide sequence ID" value="NC_008345.1"/>
</dbReference>
<dbReference type="SMR" id="Q087W5"/>
<dbReference type="STRING" id="318167.Sfri_0589"/>
<dbReference type="MEROPS" id="M38.A02"/>
<dbReference type="KEGG" id="sfr:Sfri_0589"/>
<dbReference type="eggNOG" id="COG0418">
    <property type="taxonomic scope" value="Bacteria"/>
</dbReference>
<dbReference type="HOGENOM" id="CLU_041558_1_0_6"/>
<dbReference type="OrthoDB" id="9808095at2"/>
<dbReference type="UniPathway" id="UPA00070">
    <property type="reaction ID" value="UER00117"/>
</dbReference>
<dbReference type="Proteomes" id="UP000000684">
    <property type="component" value="Chromosome"/>
</dbReference>
<dbReference type="GO" id="GO:0005829">
    <property type="term" value="C:cytosol"/>
    <property type="evidence" value="ECO:0007669"/>
    <property type="project" value="TreeGrafter"/>
</dbReference>
<dbReference type="GO" id="GO:0004151">
    <property type="term" value="F:dihydroorotase activity"/>
    <property type="evidence" value="ECO:0007669"/>
    <property type="project" value="UniProtKB-UniRule"/>
</dbReference>
<dbReference type="GO" id="GO:0008270">
    <property type="term" value="F:zinc ion binding"/>
    <property type="evidence" value="ECO:0007669"/>
    <property type="project" value="UniProtKB-UniRule"/>
</dbReference>
<dbReference type="GO" id="GO:0006207">
    <property type="term" value="P:'de novo' pyrimidine nucleobase biosynthetic process"/>
    <property type="evidence" value="ECO:0007669"/>
    <property type="project" value="TreeGrafter"/>
</dbReference>
<dbReference type="GO" id="GO:0044205">
    <property type="term" value="P:'de novo' UMP biosynthetic process"/>
    <property type="evidence" value="ECO:0007669"/>
    <property type="project" value="UniProtKB-UniRule"/>
</dbReference>
<dbReference type="CDD" id="cd01294">
    <property type="entry name" value="DHOase"/>
    <property type="match status" value="1"/>
</dbReference>
<dbReference type="FunFam" id="3.20.20.140:FF:000006">
    <property type="entry name" value="Dihydroorotase"/>
    <property type="match status" value="1"/>
</dbReference>
<dbReference type="Gene3D" id="3.20.20.140">
    <property type="entry name" value="Metal-dependent hydrolases"/>
    <property type="match status" value="1"/>
</dbReference>
<dbReference type="HAMAP" id="MF_00219">
    <property type="entry name" value="PyrC_classII"/>
    <property type="match status" value="1"/>
</dbReference>
<dbReference type="InterPro" id="IPR006680">
    <property type="entry name" value="Amidohydro-rel"/>
</dbReference>
<dbReference type="InterPro" id="IPR004721">
    <property type="entry name" value="DHOdimr"/>
</dbReference>
<dbReference type="InterPro" id="IPR002195">
    <property type="entry name" value="Dihydroorotase_CS"/>
</dbReference>
<dbReference type="InterPro" id="IPR032466">
    <property type="entry name" value="Metal_Hydrolase"/>
</dbReference>
<dbReference type="NCBIfam" id="TIGR00856">
    <property type="entry name" value="pyrC_dimer"/>
    <property type="match status" value="1"/>
</dbReference>
<dbReference type="PANTHER" id="PTHR43137">
    <property type="entry name" value="DIHYDROOROTASE"/>
    <property type="match status" value="1"/>
</dbReference>
<dbReference type="PANTHER" id="PTHR43137:SF1">
    <property type="entry name" value="DIHYDROOROTASE"/>
    <property type="match status" value="1"/>
</dbReference>
<dbReference type="Pfam" id="PF01979">
    <property type="entry name" value="Amidohydro_1"/>
    <property type="match status" value="1"/>
</dbReference>
<dbReference type="PIRSF" id="PIRSF001237">
    <property type="entry name" value="DHOdimr"/>
    <property type="match status" value="1"/>
</dbReference>
<dbReference type="SUPFAM" id="SSF51556">
    <property type="entry name" value="Metallo-dependent hydrolases"/>
    <property type="match status" value="1"/>
</dbReference>
<dbReference type="PROSITE" id="PS00482">
    <property type="entry name" value="DIHYDROOROTASE_1"/>
    <property type="match status" value="1"/>
</dbReference>
<dbReference type="PROSITE" id="PS00483">
    <property type="entry name" value="DIHYDROOROTASE_2"/>
    <property type="match status" value="1"/>
</dbReference>
<keyword id="KW-0378">Hydrolase</keyword>
<keyword id="KW-0479">Metal-binding</keyword>
<keyword id="KW-0665">Pyrimidine biosynthesis</keyword>
<keyword id="KW-1185">Reference proteome</keyword>
<keyword id="KW-0862">Zinc</keyword>
<organism>
    <name type="scientific">Shewanella frigidimarina (strain NCIMB 400)</name>
    <dbReference type="NCBI Taxonomy" id="318167"/>
    <lineage>
        <taxon>Bacteria</taxon>
        <taxon>Pseudomonadati</taxon>
        <taxon>Pseudomonadota</taxon>
        <taxon>Gammaproteobacteria</taxon>
        <taxon>Alteromonadales</taxon>
        <taxon>Shewanellaceae</taxon>
        <taxon>Shewanella</taxon>
    </lineage>
</organism>
<protein>
    <recommendedName>
        <fullName evidence="1">Dihydroorotase</fullName>
        <shortName evidence="1">DHOase</shortName>
        <ecNumber evidence="1">3.5.2.3</ecNumber>
    </recommendedName>
</protein>
<feature type="chain" id="PRO_1000024054" description="Dihydroorotase">
    <location>
        <begin position="1"/>
        <end position="345"/>
    </location>
</feature>
<feature type="active site" evidence="1">
    <location>
        <position position="246"/>
    </location>
</feature>
<feature type="binding site" evidence="1">
    <location>
        <position position="13"/>
    </location>
    <ligand>
        <name>Zn(2+)</name>
        <dbReference type="ChEBI" id="CHEBI:29105"/>
        <label>1</label>
    </ligand>
</feature>
<feature type="binding site" evidence="1">
    <location>
        <begin position="15"/>
        <end position="17"/>
    </location>
    <ligand>
        <name>substrate</name>
    </ligand>
</feature>
<feature type="binding site" evidence="1">
    <location>
        <position position="15"/>
    </location>
    <ligand>
        <name>Zn(2+)</name>
        <dbReference type="ChEBI" id="CHEBI:29105"/>
        <label>1</label>
    </ligand>
</feature>
<feature type="binding site" evidence="1">
    <location>
        <position position="41"/>
    </location>
    <ligand>
        <name>substrate</name>
    </ligand>
</feature>
<feature type="binding site" description="via carbamate group" evidence="1">
    <location>
        <position position="98"/>
    </location>
    <ligand>
        <name>Zn(2+)</name>
        <dbReference type="ChEBI" id="CHEBI:29105"/>
        <label>1</label>
    </ligand>
</feature>
<feature type="binding site" description="via carbamate group" evidence="1">
    <location>
        <position position="98"/>
    </location>
    <ligand>
        <name>Zn(2+)</name>
        <dbReference type="ChEBI" id="CHEBI:29105"/>
        <label>2</label>
    </ligand>
</feature>
<feature type="binding site" evidence="1">
    <location>
        <position position="135"/>
    </location>
    <ligand>
        <name>substrate</name>
    </ligand>
</feature>
<feature type="binding site" evidence="1">
    <location>
        <position position="135"/>
    </location>
    <ligand>
        <name>Zn(2+)</name>
        <dbReference type="ChEBI" id="CHEBI:29105"/>
        <label>2</label>
    </ligand>
</feature>
<feature type="binding site" evidence="1">
    <location>
        <position position="173"/>
    </location>
    <ligand>
        <name>Zn(2+)</name>
        <dbReference type="ChEBI" id="CHEBI:29105"/>
        <label>2</label>
    </ligand>
</feature>
<feature type="binding site" evidence="1">
    <location>
        <position position="218"/>
    </location>
    <ligand>
        <name>substrate</name>
    </ligand>
</feature>
<feature type="binding site" evidence="1">
    <location>
        <position position="246"/>
    </location>
    <ligand>
        <name>Zn(2+)</name>
        <dbReference type="ChEBI" id="CHEBI:29105"/>
        <label>1</label>
    </ligand>
</feature>
<feature type="binding site" evidence="1">
    <location>
        <position position="250"/>
    </location>
    <ligand>
        <name>substrate</name>
    </ligand>
</feature>
<feature type="binding site" evidence="1">
    <location>
        <position position="262"/>
    </location>
    <ligand>
        <name>substrate</name>
    </ligand>
</feature>
<feature type="modified residue" description="N6-carboxylysine" evidence="1">
    <location>
        <position position="98"/>
    </location>
</feature>
<reference key="1">
    <citation type="submission" date="2006-08" db="EMBL/GenBank/DDBJ databases">
        <title>Complete sequence of Shewanella frigidimarina NCIMB 400.</title>
        <authorList>
            <consortium name="US DOE Joint Genome Institute"/>
            <person name="Copeland A."/>
            <person name="Lucas S."/>
            <person name="Lapidus A."/>
            <person name="Barry K."/>
            <person name="Detter J.C."/>
            <person name="Glavina del Rio T."/>
            <person name="Hammon N."/>
            <person name="Israni S."/>
            <person name="Dalin E."/>
            <person name="Tice H."/>
            <person name="Pitluck S."/>
            <person name="Fredrickson J.K."/>
            <person name="Kolker E."/>
            <person name="McCuel L.A."/>
            <person name="DiChristina T."/>
            <person name="Nealson K.H."/>
            <person name="Newman D."/>
            <person name="Tiedje J.M."/>
            <person name="Zhou J."/>
            <person name="Romine M.F."/>
            <person name="Culley D.E."/>
            <person name="Serres M."/>
            <person name="Chertkov O."/>
            <person name="Brettin T."/>
            <person name="Bruce D."/>
            <person name="Han C."/>
            <person name="Tapia R."/>
            <person name="Gilna P."/>
            <person name="Schmutz J."/>
            <person name="Larimer F."/>
            <person name="Land M."/>
            <person name="Hauser L."/>
            <person name="Kyrpides N."/>
            <person name="Mikhailova N."/>
            <person name="Richardson P."/>
        </authorList>
    </citation>
    <scope>NUCLEOTIDE SEQUENCE [LARGE SCALE GENOMIC DNA]</scope>
    <source>
        <strain>NCIMB 400</strain>
    </source>
</reference>
<evidence type="ECO:0000255" key="1">
    <source>
        <dbReference type="HAMAP-Rule" id="MF_00219"/>
    </source>
</evidence>
<gene>
    <name evidence="1" type="primary">pyrC</name>
    <name type="ordered locus">Sfri_0589</name>
</gene>